<reference key="1">
    <citation type="journal article" date="2007" name="J. Bacteriol.">
        <title>Genome of the opportunistic pathogen Streptococcus sanguinis.</title>
        <authorList>
            <person name="Xu P."/>
            <person name="Alves J.M."/>
            <person name="Kitten T."/>
            <person name="Brown A."/>
            <person name="Chen Z."/>
            <person name="Ozaki L.S."/>
            <person name="Manque P."/>
            <person name="Ge X."/>
            <person name="Serrano M.G."/>
            <person name="Puiu D."/>
            <person name="Hendricks S."/>
            <person name="Wang Y."/>
            <person name="Chaplin M.D."/>
            <person name="Akan D."/>
            <person name="Paik S."/>
            <person name="Peterson D.L."/>
            <person name="Macrina F.L."/>
            <person name="Buck G.A."/>
        </authorList>
    </citation>
    <scope>NUCLEOTIDE SEQUENCE [LARGE SCALE GENOMIC DNA]</scope>
    <source>
        <strain>SK36</strain>
    </source>
</reference>
<comment type="function">
    <text evidence="1">Regulates transcriptional attenuation of the pyrimidine nucleotide (pyr) operon by binding in a uridine-dependent manner to specific sites on pyr mRNA. This disrupts an antiterminator hairpin in the RNA and favors formation of a downstream transcription terminator, leading to a reduced expression of downstream genes.</text>
</comment>
<comment type="function">
    <text evidence="1">Also displays a weak uracil phosphoribosyltransferase activity which is not physiologically significant.</text>
</comment>
<comment type="catalytic activity">
    <reaction evidence="1">
        <text>UMP + diphosphate = 5-phospho-alpha-D-ribose 1-diphosphate + uracil</text>
        <dbReference type="Rhea" id="RHEA:13017"/>
        <dbReference type="ChEBI" id="CHEBI:17568"/>
        <dbReference type="ChEBI" id="CHEBI:33019"/>
        <dbReference type="ChEBI" id="CHEBI:57865"/>
        <dbReference type="ChEBI" id="CHEBI:58017"/>
        <dbReference type="EC" id="2.4.2.9"/>
    </reaction>
</comment>
<comment type="subunit">
    <text evidence="1">Homodimer and homohexamer; in equilibrium.</text>
</comment>
<comment type="similarity">
    <text evidence="1">Belongs to the purine/pyrimidine phosphoribosyltransferase family. PyrR subfamily.</text>
</comment>
<protein>
    <recommendedName>
        <fullName evidence="1">Bifunctional protein PyrR</fullName>
    </recommendedName>
    <domain>
        <recommendedName>
            <fullName evidence="1">Pyrimidine operon regulatory protein</fullName>
        </recommendedName>
    </domain>
    <domain>
        <recommendedName>
            <fullName evidence="1">Uracil phosphoribosyltransferase</fullName>
            <shortName evidence="1">UPRTase</shortName>
            <ecNumber evidence="1">2.4.2.9</ecNumber>
        </recommendedName>
    </domain>
</protein>
<sequence length="172" mass="19472">MKTKEVVDDITMNRAITRITYEIIERNKDLNQVVLAGIKTRGVHLAHRIQKRLAQLENIDIPVAEVDTKPFRDDIKVEEDTTVIPVDITDRQVILIDDVLYTGRTIRAAIDNLVSHGRPSRVGLAVLVDRGHRELPIRADYVGKNIPTSQTEEIIVEMTETDGQDRVLIMGE</sequence>
<dbReference type="EC" id="2.4.2.9" evidence="1"/>
<dbReference type="EMBL" id="CP000387">
    <property type="protein sequence ID" value="ABN44744.1"/>
    <property type="molecule type" value="Genomic_DNA"/>
</dbReference>
<dbReference type="RefSeq" id="WP_002904664.1">
    <property type="nucleotide sequence ID" value="NC_009009.1"/>
</dbReference>
<dbReference type="RefSeq" id="YP_001035294.1">
    <property type="nucleotide sequence ID" value="NC_009009.1"/>
</dbReference>
<dbReference type="SMR" id="A3CNI9"/>
<dbReference type="STRING" id="388919.SSA_1345"/>
<dbReference type="KEGG" id="ssa:SSA_1345"/>
<dbReference type="PATRIC" id="fig|388919.9.peg.1279"/>
<dbReference type="eggNOG" id="COG2065">
    <property type="taxonomic scope" value="Bacteria"/>
</dbReference>
<dbReference type="HOGENOM" id="CLU_094234_2_1_9"/>
<dbReference type="OrthoDB" id="9802227at2"/>
<dbReference type="Proteomes" id="UP000002148">
    <property type="component" value="Chromosome"/>
</dbReference>
<dbReference type="GO" id="GO:0003723">
    <property type="term" value="F:RNA binding"/>
    <property type="evidence" value="ECO:0007669"/>
    <property type="project" value="UniProtKB-UniRule"/>
</dbReference>
<dbReference type="GO" id="GO:0004845">
    <property type="term" value="F:uracil phosphoribosyltransferase activity"/>
    <property type="evidence" value="ECO:0007669"/>
    <property type="project" value="UniProtKB-UniRule"/>
</dbReference>
<dbReference type="GO" id="GO:0006353">
    <property type="term" value="P:DNA-templated transcription termination"/>
    <property type="evidence" value="ECO:0007669"/>
    <property type="project" value="UniProtKB-UniRule"/>
</dbReference>
<dbReference type="CDD" id="cd06223">
    <property type="entry name" value="PRTases_typeI"/>
    <property type="match status" value="1"/>
</dbReference>
<dbReference type="FunFam" id="3.40.50.2020:FF:000020">
    <property type="entry name" value="Bifunctional protein PyrR"/>
    <property type="match status" value="1"/>
</dbReference>
<dbReference type="Gene3D" id="3.40.50.2020">
    <property type="match status" value="1"/>
</dbReference>
<dbReference type="HAMAP" id="MF_01219">
    <property type="entry name" value="PyrR"/>
    <property type="match status" value="1"/>
</dbReference>
<dbReference type="InterPro" id="IPR000836">
    <property type="entry name" value="PRibTrfase_dom"/>
</dbReference>
<dbReference type="InterPro" id="IPR029057">
    <property type="entry name" value="PRTase-like"/>
</dbReference>
<dbReference type="InterPro" id="IPR023050">
    <property type="entry name" value="PyrR"/>
</dbReference>
<dbReference type="InterPro" id="IPR050137">
    <property type="entry name" value="PyrR_bifunctional"/>
</dbReference>
<dbReference type="NCBIfam" id="NF003548">
    <property type="entry name" value="PRK05205.1-4"/>
    <property type="match status" value="1"/>
</dbReference>
<dbReference type="NCBIfam" id="NF003549">
    <property type="entry name" value="PRK05205.1-5"/>
    <property type="match status" value="1"/>
</dbReference>
<dbReference type="PANTHER" id="PTHR11608">
    <property type="entry name" value="BIFUNCTIONAL PROTEIN PYRR"/>
    <property type="match status" value="1"/>
</dbReference>
<dbReference type="PANTHER" id="PTHR11608:SF0">
    <property type="entry name" value="BIFUNCTIONAL PROTEIN PYRR"/>
    <property type="match status" value="1"/>
</dbReference>
<dbReference type="Pfam" id="PF00156">
    <property type="entry name" value="Pribosyltran"/>
    <property type="match status" value="1"/>
</dbReference>
<dbReference type="SUPFAM" id="SSF53271">
    <property type="entry name" value="PRTase-like"/>
    <property type="match status" value="1"/>
</dbReference>
<name>PYRR_STRSV</name>
<gene>
    <name evidence="1" type="primary">pyrR</name>
    <name type="ordered locus">SSA_1345</name>
</gene>
<keyword id="KW-0328">Glycosyltransferase</keyword>
<keyword id="KW-1185">Reference proteome</keyword>
<keyword id="KW-0694">RNA-binding</keyword>
<keyword id="KW-0804">Transcription</keyword>
<keyword id="KW-0805">Transcription regulation</keyword>
<keyword id="KW-0806">Transcription termination</keyword>
<keyword id="KW-0808">Transferase</keyword>
<evidence type="ECO:0000255" key="1">
    <source>
        <dbReference type="HAMAP-Rule" id="MF_01219"/>
    </source>
</evidence>
<organism>
    <name type="scientific">Streptococcus sanguinis (strain SK36)</name>
    <dbReference type="NCBI Taxonomy" id="388919"/>
    <lineage>
        <taxon>Bacteria</taxon>
        <taxon>Bacillati</taxon>
        <taxon>Bacillota</taxon>
        <taxon>Bacilli</taxon>
        <taxon>Lactobacillales</taxon>
        <taxon>Streptococcaceae</taxon>
        <taxon>Streptococcus</taxon>
    </lineage>
</organism>
<feature type="chain" id="PRO_1000053876" description="Bifunctional protein PyrR">
    <location>
        <begin position="1"/>
        <end position="172"/>
    </location>
</feature>
<feature type="short sequence motif" description="PRPP-binding" evidence="1">
    <location>
        <begin position="93"/>
        <end position="105"/>
    </location>
</feature>
<accession>A3CNI9</accession>
<proteinExistence type="inferred from homology"/>